<name>MDH_TRIL1</name>
<gene>
    <name evidence="1" type="primary">mdh</name>
    <name type="ordered locus">Glov_1625</name>
</gene>
<feature type="chain" id="PRO_1000126134" description="Malate dehydrogenase">
    <location>
        <begin position="1"/>
        <end position="321"/>
    </location>
</feature>
<feature type="active site" description="Proton acceptor" evidence="1">
    <location>
        <position position="176"/>
    </location>
</feature>
<feature type="binding site" evidence="1">
    <location>
        <begin position="10"/>
        <end position="15"/>
    </location>
    <ligand>
        <name>NAD(+)</name>
        <dbReference type="ChEBI" id="CHEBI:57540"/>
    </ligand>
</feature>
<feature type="binding site" evidence="1">
    <location>
        <position position="34"/>
    </location>
    <ligand>
        <name>NAD(+)</name>
        <dbReference type="ChEBI" id="CHEBI:57540"/>
    </ligand>
</feature>
<feature type="binding site" evidence="1">
    <location>
        <position position="83"/>
    </location>
    <ligand>
        <name>substrate</name>
    </ligand>
</feature>
<feature type="binding site" evidence="1">
    <location>
        <position position="89"/>
    </location>
    <ligand>
        <name>substrate</name>
    </ligand>
</feature>
<feature type="binding site" evidence="1">
    <location>
        <position position="96"/>
    </location>
    <ligand>
        <name>NAD(+)</name>
        <dbReference type="ChEBI" id="CHEBI:57540"/>
    </ligand>
</feature>
<feature type="binding site" evidence="1">
    <location>
        <begin position="119"/>
        <end position="121"/>
    </location>
    <ligand>
        <name>NAD(+)</name>
        <dbReference type="ChEBI" id="CHEBI:57540"/>
    </ligand>
</feature>
<feature type="binding site" evidence="1">
    <location>
        <position position="121"/>
    </location>
    <ligand>
        <name>substrate</name>
    </ligand>
</feature>
<feature type="binding site" evidence="1">
    <location>
        <position position="152"/>
    </location>
    <ligand>
        <name>substrate</name>
    </ligand>
</feature>
<protein>
    <recommendedName>
        <fullName evidence="1">Malate dehydrogenase</fullName>
        <ecNumber evidence="1">1.1.1.37</ecNumber>
    </recommendedName>
</protein>
<evidence type="ECO:0000255" key="1">
    <source>
        <dbReference type="HAMAP-Rule" id="MF_00487"/>
    </source>
</evidence>
<organism>
    <name type="scientific">Trichlorobacter lovleyi (strain ATCC BAA-1151 / DSM 17278 / SZ)</name>
    <name type="common">Geobacter lovleyi</name>
    <dbReference type="NCBI Taxonomy" id="398767"/>
    <lineage>
        <taxon>Bacteria</taxon>
        <taxon>Pseudomonadati</taxon>
        <taxon>Thermodesulfobacteriota</taxon>
        <taxon>Desulfuromonadia</taxon>
        <taxon>Geobacterales</taxon>
        <taxon>Geobacteraceae</taxon>
        <taxon>Trichlorobacter</taxon>
    </lineage>
</organism>
<reference key="1">
    <citation type="submission" date="2008-05" db="EMBL/GenBank/DDBJ databases">
        <title>Complete sequence of chromosome of Geobacter lovleyi SZ.</title>
        <authorList>
            <consortium name="US DOE Joint Genome Institute"/>
            <person name="Lucas S."/>
            <person name="Copeland A."/>
            <person name="Lapidus A."/>
            <person name="Glavina del Rio T."/>
            <person name="Dalin E."/>
            <person name="Tice H."/>
            <person name="Bruce D."/>
            <person name="Goodwin L."/>
            <person name="Pitluck S."/>
            <person name="Chertkov O."/>
            <person name="Meincke L."/>
            <person name="Brettin T."/>
            <person name="Detter J.C."/>
            <person name="Han C."/>
            <person name="Tapia R."/>
            <person name="Kuske C.R."/>
            <person name="Schmutz J."/>
            <person name="Larimer F."/>
            <person name="Land M."/>
            <person name="Hauser L."/>
            <person name="Kyrpides N."/>
            <person name="Mikhailova N."/>
            <person name="Sung Y."/>
            <person name="Fletcher K.E."/>
            <person name="Ritalahti K.M."/>
            <person name="Loeffler F.E."/>
            <person name="Richardson P."/>
        </authorList>
    </citation>
    <scope>NUCLEOTIDE SEQUENCE [LARGE SCALE GENOMIC DNA]</scope>
    <source>
        <strain>ATCC BAA-1151 / DSM 17278 / SZ</strain>
    </source>
</reference>
<sequence length="321" mass="33738">MGRKKISLIGGGQIGGVLAQLCALRELGDVVMFDIVEGMPQGKMLDIAEASPVDGFDVCLQGTQDYKDIAGSDVVIVTAGLPRKPGMSRDDLIATNSKIMTSVAEGIKQYASNAFVIIISNPLDAMVTLCQKITGMPANRVVGQAGVLDSARFKAFIAWELGVSVKDVSAMTLGGHGDDMVPLVRYAAVNGIPVMELLEQKYGAEKAKEVMEAMVNRTRLAGGEVVALLKTGSAFYSPASSAIAMAESVLKDQKRVLPTCCLLNGEFGVNGYYVGVPAVLGASGVEKILQFKLDATEQAMMDKSVAAVKGLVDSLDSILKG</sequence>
<accession>B3E9R5</accession>
<proteinExistence type="inferred from homology"/>
<comment type="function">
    <text evidence="1">Catalyzes the reversible oxidation of malate to oxaloacetate.</text>
</comment>
<comment type="catalytic activity">
    <reaction evidence="1">
        <text>(S)-malate + NAD(+) = oxaloacetate + NADH + H(+)</text>
        <dbReference type="Rhea" id="RHEA:21432"/>
        <dbReference type="ChEBI" id="CHEBI:15378"/>
        <dbReference type="ChEBI" id="CHEBI:15589"/>
        <dbReference type="ChEBI" id="CHEBI:16452"/>
        <dbReference type="ChEBI" id="CHEBI:57540"/>
        <dbReference type="ChEBI" id="CHEBI:57945"/>
        <dbReference type="EC" id="1.1.1.37"/>
    </reaction>
</comment>
<comment type="similarity">
    <text evidence="1">Belongs to the LDH/MDH superfamily. MDH type 3 family.</text>
</comment>
<keyword id="KW-0520">NAD</keyword>
<keyword id="KW-0560">Oxidoreductase</keyword>
<keyword id="KW-1185">Reference proteome</keyword>
<keyword id="KW-0816">Tricarboxylic acid cycle</keyword>
<dbReference type="EC" id="1.1.1.37" evidence="1"/>
<dbReference type="EMBL" id="CP001089">
    <property type="protein sequence ID" value="ACD95341.1"/>
    <property type="molecule type" value="Genomic_DNA"/>
</dbReference>
<dbReference type="RefSeq" id="WP_012469683.1">
    <property type="nucleotide sequence ID" value="NC_010814.1"/>
</dbReference>
<dbReference type="SMR" id="B3E9R5"/>
<dbReference type="STRING" id="398767.Glov_1625"/>
<dbReference type="KEGG" id="glo:Glov_1625"/>
<dbReference type="eggNOG" id="COG0039">
    <property type="taxonomic scope" value="Bacteria"/>
</dbReference>
<dbReference type="HOGENOM" id="CLU_045401_2_1_7"/>
<dbReference type="OrthoDB" id="9802969at2"/>
<dbReference type="Proteomes" id="UP000002420">
    <property type="component" value="Chromosome"/>
</dbReference>
<dbReference type="GO" id="GO:0004459">
    <property type="term" value="F:L-lactate dehydrogenase activity"/>
    <property type="evidence" value="ECO:0007669"/>
    <property type="project" value="TreeGrafter"/>
</dbReference>
<dbReference type="GO" id="GO:0030060">
    <property type="term" value="F:L-malate dehydrogenase (NAD+) activity"/>
    <property type="evidence" value="ECO:0007669"/>
    <property type="project" value="UniProtKB-UniRule"/>
</dbReference>
<dbReference type="GO" id="GO:0006089">
    <property type="term" value="P:lactate metabolic process"/>
    <property type="evidence" value="ECO:0007669"/>
    <property type="project" value="TreeGrafter"/>
</dbReference>
<dbReference type="GO" id="GO:0006099">
    <property type="term" value="P:tricarboxylic acid cycle"/>
    <property type="evidence" value="ECO:0007669"/>
    <property type="project" value="UniProtKB-UniRule"/>
</dbReference>
<dbReference type="CDD" id="cd01339">
    <property type="entry name" value="LDH-like_MDH"/>
    <property type="match status" value="1"/>
</dbReference>
<dbReference type="FunFam" id="3.40.50.720:FF:000018">
    <property type="entry name" value="Malate dehydrogenase"/>
    <property type="match status" value="1"/>
</dbReference>
<dbReference type="FunFam" id="3.90.110.10:FF:000004">
    <property type="entry name" value="Malate dehydrogenase"/>
    <property type="match status" value="1"/>
</dbReference>
<dbReference type="Gene3D" id="3.90.110.10">
    <property type="entry name" value="Lactate dehydrogenase/glycoside hydrolase, family 4, C-terminal"/>
    <property type="match status" value="1"/>
</dbReference>
<dbReference type="Gene3D" id="3.40.50.720">
    <property type="entry name" value="NAD(P)-binding Rossmann-like Domain"/>
    <property type="match status" value="1"/>
</dbReference>
<dbReference type="HAMAP" id="MF_00487">
    <property type="entry name" value="Malate_dehydrog_3"/>
    <property type="match status" value="1"/>
</dbReference>
<dbReference type="InterPro" id="IPR001557">
    <property type="entry name" value="L-lactate/malate_DH"/>
</dbReference>
<dbReference type="InterPro" id="IPR022383">
    <property type="entry name" value="Lactate/malate_DH_C"/>
</dbReference>
<dbReference type="InterPro" id="IPR001236">
    <property type="entry name" value="Lactate/malate_DH_N"/>
</dbReference>
<dbReference type="InterPro" id="IPR015955">
    <property type="entry name" value="Lactate_DH/Glyco_Ohase_4_C"/>
</dbReference>
<dbReference type="InterPro" id="IPR011275">
    <property type="entry name" value="Malate_DH_type3"/>
</dbReference>
<dbReference type="InterPro" id="IPR036291">
    <property type="entry name" value="NAD(P)-bd_dom_sf"/>
</dbReference>
<dbReference type="NCBIfam" id="TIGR01763">
    <property type="entry name" value="MalateDH_bact"/>
    <property type="match status" value="1"/>
</dbReference>
<dbReference type="NCBIfam" id="NF004863">
    <property type="entry name" value="PRK06223.1"/>
    <property type="match status" value="1"/>
</dbReference>
<dbReference type="PANTHER" id="PTHR43128">
    <property type="entry name" value="L-2-HYDROXYCARBOXYLATE DEHYDROGENASE (NAD(P)(+))"/>
    <property type="match status" value="1"/>
</dbReference>
<dbReference type="PANTHER" id="PTHR43128:SF16">
    <property type="entry name" value="L-LACTATE DEHYDROGENASE"/>
    <property type="match status" value="1"/>
</dbReference>
<dbReference type="Pfam" id="PF02866">
    <property type="entry name" value="Ldh_1_C"/>
    <property type="match status" value="1"/>
</dbReference>
<dbReference type="Pfam" id="PF00056">
    <property type="entry name" value="Ldh_1_N"/>
    <property type="match status" value="1"/>
</dbReference>
<dbReference type="PIRSF" id="PIRSF000102">
    <property type="entry name" value="Lac_mal_DH"/>
    <property type="match status" value="1"/>
</dbReference>
<dbReference type="PRINTS" id="PR00086">
    <property type="entry name" value="LLDHDRGNASE"/>
</dbReference>
<dbReference type="SUPFAM" id="SSF56327">
    <property type="entry name" value="LDH C-terminal domain-like"/>
    <property type="match status" value="1"/>
</dbReference>
<dbReference type="SUPFAM" id="SSF51735">
    <property type="entry name" value="NAD(P)-binding Rossmann-fold domains"/>
    <property type="match status" value="1"/>
</dbReference>